<dbReference type="SMR" id="P68303"/>
<dbReference type="STRING" id="9541.ENSMFAP00000036495"/>
<dbReference type="Ensembl" id="ENSMFAT00000024301.2">
    <property type="protein sequence ID" value="ENSMFAP00000005623.2"/>
    <property type="gene ID" value="ENSMFAG00000002482.2"/>
</dbReference>
<dbReference type="GeneID" id="102135658"/>
<dbReference type="KEGG" id="mcf:102135658"/>
<dbReference type="VEuPathDB" id="HostDB:ENSMFAG00000029872"/>
<dbReference type="eggNOG" id="KOG4738">
    <property type="taxonomic scope" value="Eukaryota"/>
</dbReference>
<dbReference type="GeneTree" id="ENSGT00950000182967"/>
<dbReference type="OMA" id="DCKCTST"/>
<dbReference type="Proteomes" id="UP000233100">
    <property type="component" value="Chromosome 20"/>
</dbReference>
<dbReference type="Bgee" id="ENSMFAG00000002482">
    <property type="expression patterns" value="Expressed in liver and 1 other cell type or tissue"/>
</dbReference>
<dbReference type="GO" id="GO:0005737">
    <property type="term" value="C:cytoplasm"/>
    <property type="evidence" value="ECO:0000250"/>
    <property type="project" value="UniProtKB"/>
</dbReference>
<dbReference type="GO" id="GO:0005634">
    <property type="term" value="C:nucleus"/>
    <property type="evidence" value="ECO:0000250"/>
    <property type="project" value="UniProtKB"/>
</dbReference>
<dbReference type="GO" id="GO:0008270">
    <property type="term" value="F:zinc ion binding"/>
    <property type="evidence" value="ECO:0000250"/>
    <property type="project" value="UniProtKB"/>
</dbReference>
<dbReference type="GO" id="GO:0071276">
    <property type="term" value="P:cellular response to cadmium ion"/>
    <property type="evidence" value="ECO:0007669"/>
    <property type="project" value="TreeGrafter"/>
</dbReference>
<dbReference type="GO" id="GO:0071280">
    <property type="term" value="P:cellular response to copper ion"/>
    <property type="evidence" value="ECO:0007669"/>
    <property type="project" value="TreeGrafter"/>
</dbReference>
<dbReference type="GO" id="GO:0071294">
    <property type="term" value="P:cellular response to zinc ion"/>
    <property type="evidence" value="ECO:0000250"/>
    <property type="project" value="UniProtKB"/>
</dbReference>
<dbReference type="GO" id="GO:0010273">
    <property type="term" value="P:detoxification of copper ion"/>
    <property type="evidence" value="ECO:0007669"/>
    <property type="project" value="TreeGrafter"/>
</dbReference>
<dbReference type="GO" id="GO:0006882">
    <property type="term" value="P:intracellular zinc ion homeostasis"/>
    <property type="evidence" value="ECO:0007669"/>
    <property type="project" value="TreeGrafter"/>
</dbReference>
<dbReference type="GO" id="GO:0045926">
    <property type="term" value="P:negative regulation of growth"/>
    <property type="evidence" value="ECO:0000250"/>
    <property type="project" value="UniProtKB"/>
</dbReference>
<dbReference type="FunFam" id="4.10.10.10:FF:000001">
    <property type="entry name" value="Metallothionein"/>
    <property type="match status" value="1"/>
</dbReference>
<dbReference type="Gene3D" id="4.10.10.10">
    <property type="entry name" value="Metallothionein Isoform II"/>
    <property type="match status" value="1"/>
</dbReference>
<dbReference type="InterPro" id="IPR017854">
    <property type="entry name" value="Metalthion_dom_sf"/>
</dbReference>
<dbReference type="InterPro" id="IPR023587">
    <property type="entry name" value="Metalthion_dom_sf_vert"/>
</dbReference>
<dbReference type="InterPro" id="IPR000006">
    <property type="entry name" value="Metalthion_vert"/>
</dbReference>
<dbReference type="InterPro" id="IPR018064">
    <property type="entry name" value="Metalthion_vert_metal_BS"/>
</dbReference>
<dbReference type="PANTHER" id="PTHR23299">
    <property type="entry name" value="METALLOTHIONEIN"/>
    <property type="match status" value="1"/>
</dbReference>
<dbReference type="PANTHER" id="PTHR23299:SF60">
    <property type="entry name" value="METALLOTHIONEIN-2"/>
    <property type="match status" value="1"/>
</dbReference>
<dbReference type="Pfam" id="PF00131">
    <property type="entry name" value="Metallothio"/>
    <property type="match status" value="1"/>
</dbReference>
<dbReference type="PRINTS" id="PR00860">
    <property type="entry name" value="MTVERTEBRATE"/>
</dbReference>
<dbReference type="SUPFAM" id="SSF57868">
    <property type="entry name" value="Metallothionein"/>
    <property type="match status" value="1"/>
</dbReference>
<dbReference type="PROSITE" id="PS00203">
    <property type="entry name" value="METALLOTHIONEIN_VRT"/>
    <property type="match status" value="1"/>
</dbReference>
<protein>
    <recommendedName>
        <fullName>Metallothionein-2</fullName>
        <shortName>MT-2</shortName>
    </recommendedName>
    <alternativeName>
        <fullName>Metallothionein-II</fullName>
        <shortName>MT-II</shortName>
    </alternativeName>
</protein>
<organism>
    <name type="scientific">Macaca fascicularis</name>
    <name type="common">Crab-eating macaque</name>
    <name type="synonym">Cynomolgus monkey</name>
    <dbReference type="NCBI Taxonomy" id="9541"/>
    <lineage>
        <taxon>Eukaryota</taxon>
        <taxon>Metazoa</taxon>
        <taxon>Chordata</taxon>
        <taxon>Craniata</taxon>
        <taxon>Vertebrata</taxon>
        <taxon>Euteleostomi</taxon>
        <taxon>Mammalia</taxon>
        <taxon>Eutheria</taxon>
        <taxon>Euarchontoglires</taxon>
        <taxon>Primates</taxon>
        <taxon>Haplorrhini</taxon>
        <taxon>Catarrhini</taxon>
        <taxon>Cercopithecidae</taxon>
        <taxon>Cercopithecinae</taxon>
        <taxon>Macaca</taxon>
    </lineage>
</organism>
<reference key="1">
    <citation type="journal article" date="1996" name="Exp. Eye Res.">
        <title>Studies on the mechanism of early onset macular degeneration in cynomolgus monkeys. II. Suppression of metallothionein synthesis in the retina in oxidative stress.</title>
        <authorList>
            <person name="Nicolas M.G."/>
            <person name="Fujiki K."/>
            <person name="Murayama K."/>
            <person name="Suzuki M.T."/>
            <person name="Shindo N."/>
            <person name="Hotta Y."/>
            <person name="Iwata F."/>
            <person name="Fujimura T."/>
            <person name="Yoshikawa Y."/>
            <person name="Cho F."/>
            <person name="Kanai A."/>
        </authorList>
    </citation>
    <scope>NUCLEOTIDE SEQUENCE</scope>
    <source>
        <tissue>Retina</tissue>
    </source>
</reference>
<evidence type="ECO:0000250" key="1">
    <source>
        <dbReference type="UniProtKB" id="P02795"/>
    </source>
</evidence>
<evidence type="ECO:0000250" key="2">
    <source>
        <dbReference type="UniProtKB" id="P68301"/>
    </source>
</evidence>
<evidence type="ECO:0000305" key="3"/>
<name>MT2_MACFA</name>
<sequence length="61" mass="6097">MDPNCSCVAGDSCTCAGSCKCKECKCTSCKKSCCSCCPVGCAKCAQGCICKGASDKCNCCA</sequence>
<gene>
    <name type="primary">MT2</name>
</gene>
<keyword id="KW-0007">Acetylation</keyword>
<keyword id="KW-0104">Cadmium</keyword>
<keyword id="KW-0479">Metal-binding</keyword>
<keyword id="KW-0480">Metal-thiolate cluster</keyword>
<keyword id="KW-1185">Reference proteome</keyword>
<keyword id="KW-0862">Zinc</keyword>
<proteinExistence type="inferred from homology"/>
<accession>P68303</accession>
<accession>P02796</accession>
<comment type="function">
    <text>Metallothioneins have a high content of cysteine residues that bind various heavy metals; these proteins are transcriptionally regulated by both heavy metals and glucocorticoids.</text>
</comment>
<comment type="domain">
    <text>Class I metallothioneins contain 2 metal-binding domains: four divalent ions are chelated within cluster A of the alpha domain and are coordinated via cysteinyl thiolate bridges to 11 cysteine ligands. Cluster B, the corresponding region within the beta domain, can ligate three divalent ions to 9 cysteines.</text>
</comment>
<comment type="miscellaneous">
    <text>This metallothionein binds zinc.</text>
</comment>
<comment type="similarity">
    <text evidence="3">Belongs to the metallothionein superfamily. Type 1 family.</text>
</comment>
<feature type="chain" id="PRO_0000197246" description="Metallothionein-2">
    <location>
        <begin position="1"/>
        <end position="61"/>
    </location>
</feature>
<feature type="region of interest" description="Beta">
    <location>
        <begin position="1"/>
        <end position="29"/>
    </location>
</feature>
<feature type="region of interest" description="Antigenic epitope">
    <location>
        <begin position="20"/>
        <end position="25"/>
    </location>
</feature>
<feature type="region of interest" description="Alpha">
    <location>
        <begin position="30"/>
        <end position="61"/>
    </location>
</feature>
<feature type="binding site" evidence="1">
    <location>
        <position position="5"/>
    </location>
    <ligand>
        <name>a divalent metal cation</name>
        <dbReference type="ChEBI" id="CHEBI:60240"/>
        <label>1</label>
        <note>in cluster B</note>
    </ligand>
</feature>
<feature type="binding site" evidence="1">
    <location>
        <position position="7"/>
    </location>
    <ligand>
        <name>a divalent metal cation</name>
        <dbReference type="ChEBI" id="CHEBI:60240"/>
        <label>1</label>
        <note>in cluster B</note>
    </ligand>
</feature>
<feature type="binding site" evidence="1">
    <location>
        <position position="7"/>
    </location>
    <ligand>
        <name>a divalent metal cation</name>
        <dbReference type="ChEBI" id="CHEBI:60240"/>
        <label>2</label>
        <note>in cluster B</note>
    </ligand>
</feature>
<feature type="binding site" evidence="1">
    <location>
        <position position="13"/>
    </location>
    <ligand>
        <name>a divalent metal cation</name>
        <dbReference type="ChEBI" id="CHEBI:60240"/>
        <label>2</label>
        <note>in cluster B</note>
    </ligand>
</feature>
<feature type="binding site" evidence="1">
    <location>
        <position position="15"/>
    </location>
    <ligand>
        <name>a divalent metal cation</name>
        <dbReference type="ChEBI" id="CHEBI:60240"/>
        <label>2</label>
        <note>in cluster B</note>
    </ligand>
</feature>
<feature type="binding site" evidence="1">
    <location>
        <position position="15"/>
    </location>
    <ligand>
        <name>a divalent metal cation</name>
        <dbReference type="ChEBI" id="CHEBI:60240"/>
        <label>3</label>
        <note>in cluster B</note>
    </ligand>
</feature>
<feature type="binding site" evidence="1">
    <location>
        <position position="19"/>
    </location>
    <ligand>
        <name>a divalent metal cation</name>
        <dbReference type="ChEBI" id="CHEBI:60240"/>
        <label>3</label>
        <note>in cluster B</note>
    </ligand>
</feature>
<feature type="binding site" evidence="1">
    <location>
        <position position="21"/>
    </location>
    <ligand>
        <name>a divalent metal cation</name>
        <dbReference type="ChEBI" id="CHEBI:60240"/>
        <label>1</label>
        <note>in cluster B</note>
    </ligand>
</feature>
<feature type="binding site" evidence="1">
    <location>
        <position position="24"/>
    </location>
    <ligand>
        <name>a divalent metal cation</name>
        <dbReference type="ChEBI" id="CHEBI:60240"/>
        <label>1</label>
        <note>in cluster B</note>
    </ligand>
</feature>
<feature type="binding site" evidence="1">
    <location>
        <position position="24"/>
    </location>
    <ligand>
        <name>a divalent metal cation</name>
        <dbReference type="ChEBI" id="CHEBI:60240"/>
        <label>3</label>
        <note>in cluster B</note>
    </ligand>
</feature>
<feature type="binding site" evidence="1">
    <location>
        <position position="26"/>
    </location>
    <ligand>
        <name>a divalent metal cation</name>
        <dbReference type="ChEBI" id="CHEBI:60240"/>
        <label>2</label>
        <note>in cluster B</note>
    </ligand>
</feature>
<feature type="binding site" evidence="1">
    <location>
        <position position="29"/>
    </location>
    <ligand>
        <name>a divalent metal cation</name>
        <dbReference type="ChEBI" id="CHEBI:60240"/>
        <label>3</label>
        <note>in cluster B</note>
    </ligand>
</feature>
<feature type="binding site" evidence="1">
    <location>
        <position position="33"/>
    </location>
    <ligand>
        <name>a divalent metal cation</name>
        <dbReference type="ChEBI" id="CHEBI:60240"/>
        <label>4</label>
        <note>in cluster A</note>
    </ligand>
</feature>
<feature type="binding site" evidence="1">
    <location>
        <position position="34"/>
    </location>
    <ligand>
        <name>a divalent metal cation</name>
        <dbReference type="ChEBI" id="CHEBI:60240"/>
        <label>4</label>
        <note>in cluster A</note>
    </ligand>
</feature>
<feature type="binding site" evidence="1">
    <location>
        <position position="34"/>
    </location>
    <ligand>
        <name>a divalent metal cation</name>
        <dbReference type="ChEBI" id="CHEBI:60240"/>
        <label>5</label>
        <note>in cluster A</note>
    </ligand>
</feature>
<feature type="binding site" evidence="1">
    <location>
        <position position="36"/>
    </location>
    <ligand>
        <name>a divalent metal cation</name>
        <dbReference type="ChEBI" id="CHEBI:60240"/>
        <label>5</label>
        <note>in cluster A</note>
    </ligand>
</feature>
<feature type="binding site" evidence="1">
    <location>
        <position position="37"/>
    </location>
    <ligand>
        <name>a divalent metal cation</name>
        <dbReference type="ChEBI" id="CHEBI:60240"/>
        <label>5</label>
        <note>in cluster A</note>
    </ligand>
</feature>
<feature type="binding site" evidence="1">
    <location>
        <position position="37"/>
    </location>
    <ligand>
        <name>a divalent metal cation</name>
        <dbReference type="ChEBI" id="CHEBI:60240"/>
        <label>6</label>
        <note>in cluster A</note>
    </ligand>
</feature>
<feature type="binding site" evidence="1">
    <location>
        <position position="41"/>
    </location>
    <ligand>
        <name>a divalent metal cation</name>
        <dbReference type="ChEBI" id="CHEBI:60240"/>
        <label>6</label>
        <note>in cluster A</note>
    </ligand>
</feature>
<feature type="binding site" evidence="1">
    <location>
        <position position="44"/>
    </location>
    <ligand>
        <name>a divalent metal cation</name>
        <dbReference type="ChEBI" id="CHEBI:60240"/>
        <label>4</label>
        <note>in cluster A</note>
    </ligand>
</feature>
<feature type="binding site" evidence="1">
    <location>
        <position position="44"/>
    </location>
    <ligand>
        <name>a divalent metal cation</name>
        <dbReference type="ChEBI" id="CHEBI:60240"/>
        <label>6</label>
        <note>in cluster A</note>
    </ligand>
</feature>
<feature type="binding site" evidence="1">
    <location>
        <position position="48"/>
    </location>
    <ligand>
        <name>a divalent metal cation</name>
        <dbReference type="ChEBI" id="CHEBI:60240"/>
        <label>4</label>
        <note>in cluster A</note>
    </ligand>
</feature>
<feature type="binding site" evidence="1">
    <location>
        <position position="50"/>
    </location>
    <ligand>
        <name>a divalent metal cation</name>
        <dbReference type="ChEBI" id="CHEBI:60240"/>
        <label>5</label>
        <note>in cluster A</note>
    </ligand>
</feature>
<feature type="binding site" evidence="1">
    <location>
        <position position="50"/>
    </location>
    <ligand>
        <name>a divalent metal cation</name>
        <dbReference type="ChEBI" id="CHEBI:60240"/>
        <label>7</label>
        <note>in cluster A</note>
    </ligand>
</feature>
<feature type="binding site" evidence="1">
    <location>
        <position position="57"/>
    </location>
    <ligand>
        <name>a divalent metal cation</name>
        <dbReference type="ChEBI" id="CHEBI:60240"/>
        <label>7</label>
        <note>in cluster A</note>
    </ligand>
</feature>
<feature type="binding site" evidence="1">
    <location>
        <position position="59"/>
    </location>
    <ligand>
        <name>a divalent metal cation</name>
        <dbReference type="ChEBI" id="CHEBI:60240"/>
        <label>7</label>
        <note>in cluster A</note>
    </ligand>
</feature>
<feature type="binding site" evidence="1">
    <location>
        <position position="60"/>
    </location>
    <ligand>
        <name>a divalent metal cation</name>
        <dbReference type="ChEBI" id="CHEBI:60240"/>
        <label>6</label>
        <note>in cluster A</note>
    </ligand>
</feature>
<feature type="binding site" evidence="1">
    <location>
        <position position="60"/>
    </location>
    <ligand>
        <name>a divalent metal cation</name>
        <dbReference type="ChEBI" id="CHEBI:60240"/>
        <label>7</label>
        <note>in cluster A</note>
    </ligand>
</feature>
<feature type="modified residue" description="N-acetylmethionine" evidence="2">
    <location>
        <position position="1"/>
    </location>
</feature>